<reference key="1">
    <citation type="journal article" date="2008" name="J. Bacteriol.">
        <title>The pangenome structure of Escherichia coli: comparative genomic analysis of E. coli commensal and pathogenic isolates.</title>
        <authorList>
            <person name="Rasko D.A."/>
            <person name="Rosovitz M.J."/>
            <person name="Myers G.S.A."/>
            <person name="Mongodin E.F."/>
            <person name="Fricke W.F."/>
            <person name="Gajer P."/>
            <person name="Crabtree J."/>
            <person name="Sebaihia M."/>
            <person name="Thomson N.R."/>
            <person name="Chaudhuri R."/>
            <person name="Henderson I.R."/>
            <person name="Sperandio V."/>
            <person name="Ravel J."/>
        </authorList>
    </citation>
    <scope>NUCLEOTIDE SEQUENCE [LARGE SCALE GENOMIC DNA]</scope>
    <source>
        <strain>HS</strain>
    </source>
</reference>
<dbReference type="EC" id="2.7.4.22" evidence="1"/>
<dbReference type="EMBL" id="CP000802">
    <property type="protein sequence ID" value="ABV04571.1"/>
    <property type="molecule type" value="Genomic_DNA"/>
</dbReference>
<dbReference type="RefSeq" id="WP_000224573.1">
    <property type="nucleotide sequence ID" value="NC_009800.1"/>
</dbReference>
<dbReference type="SMR" id="A7ZWB7"/>
<dbReference type="GeneID" id="93777254"/>
<dbReference type="KEGG" id="ecx:EcHS_A0173"/>
<dbReference type="HOGENOM" id="CLU_033861_0_0_6"/>
<dbReference type="BRENDA" id="2.7.4.22">
    <property type="organism ID" value="2026"/>
</dbReference>
<dbReference type="UniPathway" id="UPA00159">
    <property type="reaction ID" value="UER00275"/>
</dbReference>
<dbReference type="GO" id="GO:0005829">
    <property type="term" value="C:cytosol"/>
    <property type="evidence" value="ECO:0007669"/>
    <property type="project" value="TreeGrafter"/>
</dbReference>
<dbReference type="GO" id="GO:0005524">
    <property type="term" value="F:ATP binding"/>
    <property type="evidence" value="ECO:0007669"/>
    <property type="project" value="UniProtKB-KW"/>
</dbReference>
<dbReference type="GO" id="GO:0033862">
    <property type="term" value="F:UMP kinase activity"/>
    <property type="evidence" value="ECO:0007669"/>
    <property type="project" value="UniProtKB-EC"/>
</dbReference>
<dbReference type="GO" id="GO:0044210">
    <property type="term" value="P:'de novo' CTP biosynthetic process"/>
    <property type="evidence" value="ECO:0007669"/>
    <property type="project" value="UniProtKB-UniRule"/>
</dbReference>
<dbReference type="GO" id="GO:0006225">
    <property type="term" value="P:UDP biosynthetic process"/>
    <property type="evidence" value="ECO:0007669"/>
    <property type="project" value="TreeGrafter"/>
</dbReference>
<dbReference type="CDD" id="cd04254">
    <property type="entry name" value="AAK_UMPK-PyrH-Ec"/>
    <property type="match status" value="1"/>
</dbReference>
<dbReference type="FunFam" id="3.40.1160.10:FF:000001">
    <property type="entry name" value="Uridylate kinase"/>
    <property type="match status" value="1"/>
</dbReference>
<dbReference type="Gene3D" id="3.40.1160.10">
    <property type="entry name" value="Acetylglutamate kinase-like"/>
    <property type="match status" value="1"/>
</dbReference>
<dbReference type="HAMAP" id="MF_01220_B">
    <property type="entry name" value="PyrH_B"/>
    <property type="match status" value="1"/>
</dbReference>
<dbReference type="InterPro" id="IPR036393">
    <property type="entry name" value="AceGlu_kinase-like_sf"/>
</dbReference>
<dbReference type="InterPro" id="IPR001048">
    <property type="entry name" value="Asp/Glu/Uridylate_kinase"/>
</dbReference>
<dbReference type="InterPro" id="IPR011817">
    <property type="entry name" value="Uridylate_kinase"/>
</dbReference>
<dbReference type="InterPro" id="IPR015963">
    <property type="entry name" value="Uridylate_kinase_bac"/>
</dbReference>
<dbReference type="NCBIfam" id="TIGR02075">
    <property type="entry name" value="pyrH_bact"/>
    <property type="match status" value="1"/>
</dbReference>
<dbReference type="PANTHER" id="PTHR42833">
    <property type="entry name" value="URIDYLATE KINASE"/>
    <property type="match status" value="1"/>
</dbReference>
<dbReference type="PANTHER" id="PTHR42833:SF4">
    <property type="entry name" value="URIDYLATE KINASE PUMPKIN, CHLOROPLASTIC"/>
    <property type="match status" value="1"/>
</dbReference>
<dbReference type="Pfam" id="PF00696">
    <property type="entry name" value="AA_kinase"/>
    <property type="match status" value="1"/>
</dbReference>
<dbReference type="PIRSF" id="PIRSF005650">
    <property type="entry name" value="Uridylate_kin"/>
    <property type="match status" value="1"/>
</dbReference>
<dbReference type="SUPFAM" id="SSF53633">
    <property type="entry name" value="Carbamate kinase-like"/>
    <property type="match status" value="1"/>
</dbReference>
<protein>
    <recommendedName>
        <fullName evidence="1">Uridylate kinase</fullName>
        <shortName evidence="1">UK</shortName>
        <ecNumber evidence="1">2.7.4.22</ecNumber>
    </recommendedName>
    <alternativeName>
        <fullName evidence="1">Uridine monophosphate kinase</fullName>
        <shortName evidence="1">UMP kinase</shortName>
        <shortName evidence="1">UMPK</shortName>
    </alternativeName>
</protein>
<organism>
    <name type="scientific">Escherichia coli O9:H4 (strain HS)</name>
    <dbReference type="NCBI Taxonomy" id="331112"/>
    <lineage>
        <taxon>Bacteria</taxon>
        <taxon>Pseudomonadati</taxon>
        <taxon>Pseudomonadota</taxon>
        <taxon>Gammaproteobacteria</taxon>
        <taxon>Enterobacterales</taxon>
        <taxon>Enterobacteriaceae</taxon>
        <taxon>Escherichia</taxon>
    </lineage>
</organism>
<proteinExistence type="inferred from homology"/>
<keyword id="KW-0021">Allosteric enzyme</keyword>
<keyword id="KW-0067">ATP-binding</keyword>
<keyword id="KW-0963">Cytoplasm</keyword>
<keyword id="KW-0418">Kinase</keyword>
<keyword id="KW-0547">Nucleotide-binding</keyword>
<keyword id="KW-0665">Pyrimidine biosynthesis</keyword>
<keyword id="KW-0808">Transferase</keyword>
<name>PYRH_ECOHS</name>
<sequence>MATNAKPVYKRILLKLSGEALQGTEGFGIDASILDRMAQEIKELVELGIQVGVVIGGGNLFRGAGLAKAGMNRVVGDHMGMLATVMNGLAMRDALHRAYVNARLMSAIPLNGVCDSYSWAEAISLLRNNRVVILSAGTGNPFFTTDSAACLRGIEIEADVVLKATKVDGVFTADPAKDPTATMYEQLTYSEVLEKELKVMDLAAFTLARDHKLPIRVFNMNKPGALRRVVMGEKEGTLITE</sequence>
<comment type="function">
    <text evidence="1">Catalyzes the reversible phosphorylation of UMP to UDP.</text>
</comment>
<comment type="catalytic activity">
    <reaction evidence="1">
        <text>UMP + ATP = UDP + ADP</text>
        <dbReference type="Rhea" id="RHEA:24400"/>
        <dbReference type="ChEBI" id="CHEBI:30616"/>
        <dbReference type="ChEBI" id="CHEBI:57865"/>
        <dbReference type="ChEBI" id="CHEBI:58223"/>
        <dbReference type="ChEBI" id="CHEBI:456216"/>
        <dbReference type="EC" id="2.7.4.22"/>
    </reaction>
</comment>
<comment type="activity regulation">
    <text evidence="1">Allosterically activated by GTP. Inhibited by UTP.</text>
</comment>
<comment type="pathway">
    <text evidence="1">Pyrimidine metabolism; CTP biosynthesis via de novo pathway; UDP from UMP (UMPK route): step 1/1.</text>
</comment>
<comment type="subunit">
    <text evidence="1">Homohexamer.</text>
</comment>
<comment type="subcellular location">
    <subcellularLocation>
        <location evidence="1">Cytoplasm</location>
    </subcellularLocation>
</comment>
<comment type="similarity">
    <text evidence="1">Belongs to the UMP kinase family.</text>
</comment>
<evidence type="ECO:0000255" key="1">
    <source>
        <dbReference type="HAMAP-Rule" id="MF_01220"/>
    </source>
</evidence>
<gene>
    <name evidence="1" type="primary">pyrH</name>
    <name type="ordered locus">EcHS_A0173</name>
</gene>
<feature type="chain" id="PRO_1000066740" description="Uridylate kinase">
    <location>
        <begin position="1"/>
        <end position="241"/>
    </location>
</feature>
<feature type="region of interest" description="Involved in allosteric activation by GTP" evidence="1">
    <location>
        <begin position="23"/>
        <end position="28"/>
    </location>
</feature>
<feature type="binding site" evidence="1">
    <location>
        <begin position="15"/>
        <end position="18"/>
    </location>
    <ligand>
        <name>ATP</name>
        <dbReference type="ChEBI" id="CHEBI:30616"/>
    </ligand>
</feature>
<feature type="binding site" evidence="1">
    <location>
        <position position="57"/>
    </location>
    <ligand>
        <name>UMP</name>
        <dbReference type="ChEBI" id="CHEBI:57865"/>
    </ligand>
</feature>
<feature type="binding site" evidence="1">
    <location>
        <position position="58"/>
    </location>
    <ligand>
        <name>ATP</name>
        <dbReference type="ChEBI" id="CHEBI:30616"/>
    </ligand>
</feature>
<feature type="binding site" evidence="1">
    <location>
        <position position="62"/>
    </location>
    <ligand>
        <name>ATP</name>
        <dbReference type="ChEBI" id="CHEBI:30616"/>
    </ligand>
</feature>
<feature type="binding site" evidence="1">
    <location>
        <position position="77"/>
    </location>
    <ligand>
        <name>UMP</name>
        <dbReference type="ChEBI" id="CHEBI:57865"/>
    </ligand>
</feature>
<feature type="binding site" evidence="1">
    <location>
        <begin position="138"/>
        <end position="145"/>
    </location>
    <ligand>
        <name>UMP</name>
        <dbReference type="ChEBI" id="CHEBI:57865"/>
    </ligand>
</feature>
<feature type="binding site" evidence="1">
    <location>
        <position position="165"/>
    </location>
    <ligand>
        <name>ATP</name>
        <dbReference type="ChEBI" id="CHEBI:30616"/>
    </ligand>
</feature>
<feature type="binding site" evidence="1">
    <location>
        <position position="171"/>
    </location>
    <ligand>
        <name>ATP</name>
        <dbReference type="ChEBI" id="CHEBI:30616"/>
    </ligand>
</feature>
<feature type="binding site" evidence="1">
    <location>
        <position position="174"/>
    </location>
    <ligand>
        <name>ATP</name>
        <dbReference type="ChEBI" id="CHEBI:30616"/>
    </ligand>
</feature>
<accession>A7ZWB7</accession>